<gene>
    <name evidence="1" type="primary">rlmN</name>
    <name type="ordered locus">Strop_1327</name>
</gene>
<evidence type="ECO:0000255" key="1">
    <source>
        <dbReference type="HAMAP-Rule" id="MF_01849"/>
    </source>
</evidence>
<evidence type="ECO:0000255" key="2">
    <source>
        <dbReference type="PROSITE-ProRule" id="PRU01266"/>
    </source>
</evidence>
<evidence type="ECO:0000256" key="3">
    <source>
        <dbReference type="SAM" id="MobiDB-lite"/>
    </source>
</evidence>
<evidence type="ECO:0000305" key="4"/>
<accession>A4X4J7</accession>
<dbReference type="EC" id="2.1.1.192" evidence="1"/>
<dbReference type="EMBL" id="CP000667">
    <property type="protein sequence ID" value="ABP53797.1"/>
    <property type="status" value="ALT_INIT"/>
    <property type="molecule type" value="Genomic_DNA"/>
</dbReference>
<dbReference type="RefSeq" id="WP_018830171.1">
    <property type="nucleotide sequence ID" value="NC_009380.1"/>
</dbReference>
<dbReference type="SMR" id="A4X4J7"/>
<dbReference type="STRING" id="369723.Strop_1327"/>
<dbReference type="KEGG" id="stp:Strop_1327"/>
<dbReference type="PATRIC" id="fig|369723.5.peg.1354"/>
<dbReference type="eggNOG" id="COG0820">
    <property type="taxonomic scope" value="Bacteria"/>
</dbReference>
<dbReference type="HOGENOM" id="CLU_029101_0_2_11"/>
<dbReference type="Proteomes" id="UP000000235">
    <property type="component" value="Chromosome"/>
</dbReference>
<dbReference type="GO" id="GO:0005737">
    <property type="term" value="C:cytoplasm"/>
    <property type="evidence" value="ECO:0007669"/>
    <property type="project" value="UniProtKB-SubCell"/>
</dbReference>
<dbReference type="GO" id="GO:0051539">
    <property type="term" value="F:4 iron, 4 sulfur cluster binding"/>
    <property type="evidence" value="ECO:0007669"/>
    <property type="project" value="UniProtKB-UniRule"/>
</dbReference>
<dbReference type="GO" id="GO:0046872">
    <property type="term" value="F:metal ion binding"/>
    <property type="evidence" value="ECO:0007669"/>
    <property type="project" value="UniProtKB-KW"/>
</dbReference>
<dbReference type="GO" id="GO:0070040">
    <property type="term" value="F:rRNA (adenine(2503)-C2-)-methyltransferase activity"/>
    <property type="evidence" value="ECO:0007669"/>
    <property type="project" value="UniProtKB-UniRule"/>
</dbReference>
<dbReference type="GO" id="GO:0019843">
    <property type="term" value="F:rRNA binding"/>
    <property type="evidence" value="ECO:0007669"/>
    <property type="project" value="UniProtKB-UniRule"/>
</dbReference>
<dbReference type="GO" id="GO:0002935">
    <property type="term" value="F:tRNA (adenine(37)-C2)-methyltransferase activity"/>
    <property type="evidence" value="ECO:0007669"/>
    <property type="project" value="UniProtKB-UniRule"/>
</dbReference>
<dbReference type="GO" id="GO:0000049">
    <property type="term" value="F:tRNA binding"/>
    <property type="evidence" value="ECO:0007669"/>
    <property type="project" value="UniProtKB-UniRule"/>
</dbReference>
<dbReference type="GO" id="GO:0070475">
    <property type="term" value="P:rRNA base methylation"/>
    <property type="evidence" value="ECO:0007669"/>
    <property type="project" value="UniProtKB-UniRule"/>
</dbReference>
<dbReference type="GO" id="GO:0030488">
    <property type="term" value="P:tRNA methylation"/>
    <property type="evidence" value="ECO:0007669"/>
    <property type="project" value="UniProtKB-UniRule"/>
</dbReference>
<dbReference type="CDD" id="cd01335">
    <property type="entry name" value="Radical_SAM"/>
    <property type="match status" value="1"/>
</dbReference>
<dbReference type="FunFam" id="3.20.20.70:FF:000014">
    <property type="entry name" value="Probable dual-specificity RNA methyltransferase RlmN"/>
    <property type="match status" value="1"/>
</dbReference>
<dbReference type="Gene3D" id="1.10.150.530">
    <property type="match status" value="1"/>
</dbReference>
<dbReference type="Gene3D" id="3.20.20.70">
    <property type="entry name" value="Aldolase class I"/>
    <property type="match status" value="1"/>
</dbReference>
<dbReference type="HAMAP" id="MF_01849">
    <property type="entry name" value="RNA_methyltr_RlmN"/>
    <property type="match status" value="1"/>
</dbReference>
<dbReference type="InterPro" id="IPR013785">
    <property type="entry name" value="Aldolase_TIM"/>
</dbReference>
<dbReference type="InterPro" id="IPR040072">
    <property type="entry name" value="Methyltransferase_A"/>
</dbReference>
<dbReference type="InterPro" id="IPR048641">
    <property type="entry name" value="RlmN_N"/>
</dbReference>
<dbReference type="InterPro" id="IPR027492">
    <property type="entry name" value="RNA_MTrfase_RlmN"/>
</dbReference>
<dbReference type="InterPro" id="IPR004383">
    <property type="entry name" value="rRNA_lsu_MTrfase_RlmN/Cfr"/>
</dbReference>
<dbReference type="InterPro" id="IPR007197">
    <property type="entry name" value="rSAM"/>
</dbReference>
<dbReference type="NCBIfam" id="TIGR00048">
    <property type="entry name" value="rRNA_mod_RlmN"/>
    <property type="match status" value="1"/>
</dbReference>
<dbReference type="PANTHER" id="PTHR30544">
    <property type="entry name" value="23S RRNA METHYLTRANSFERASE"/>
    <property type="match status" value="1"/>
</dbReference>
<dbReference type="PANTHER" id="PTHR30544:SF5">
    <property type="entry name" value="RADICAL SAM CORE DOMAIN-CONTAINING PROTEIN"/>
    <property type="match status" value="1"/>
</dbReference>
<dbReference type="Pfam" id="PF04055">
    <property type="entry name" value="Radical_SAM"/>
    <property type="match status" value="1"/>
</dbReference>
<dbReference type="Pfam" id="PF21016">
    <property type="entry name" value="RlmN_N"/>
    <property type="match status" value="1"/>
</dbReference>
<dbReference type="PIRSF" id="PIRSF006004">
    <property type="entry name" value="CHP00048"/>
    <property type="match status" value="1"/>
</dbReference>
<dbReference type="SFLD" id="SFLDF00275">
    <property type="entry name" value="adenosine_C2_methyltransferase"/>
    <property type="match status" value="1"/>
</dbReference>
<dbReference type="SFLD" id="SFLDS00029">
    <property type="entry name" value="Radical_SAM"/>
    <property type="match status" value="1"/>
</dbReference>
<dbReference type="SUPFAM" id="SSF102114">
    <property type="entry name" value="Radical SAM enzymes"/>
    <property type="match status" value="1"/>
</dbReference>
<dbReference type="PROSITE" id="PS51918">
    <property type="entry name" value="RADICAL_SAM"/>
    <property type="match status" value="1"/>
</dbReference>
<organism>
    <name type="scientific">Salinispora tropica (strain ATCC BAA-916 / DSM 44818 / JCM 13857 / NBRC 105044 / CNB-440)</name>
    <dbReference type="NCBI Taxonomy" id="369723"/>
    <lineage>
        <taxon>Bacteria</taxon>
        <taxon>Bacillati</taxon>
        <taxon>Actinomycetota</taxon>
        <taxon>Actinomycetes</taxon>
        <taxon>Micromonosporales</taxon>
        <taxon>Micromonosporaceae</taxon>
        <taxon>Salinispora</taxon>
    </lineage>
</organism>
<protein>
    <recommendedName>
        <fullName evidence="1">Probable dual-specificity RNA methyltransferase RlmN</fullName>
        <ecNumber evidence="1">2.1.1.192</ecNumber>
    </recommendedName>
    <alternativeName>
        <fullName evidence="1">23S rRNA (adenine(2503)-C(2))-methyltransferase</fullName>
    </alternativeName>
    <alternativeName>
        <fullName evidence="1">23S rRNA m2A2503 methyltransferase</fullName>
    </alternativeName>
    <alternativeName>
        <fullName evidence="1">Ribosomal RNA large subunit methyltransferase N</fullName>
    </alternativeName>
    <alternativeName>
        <fullName evidence="1">tRNA (adenine(37)-C(2))-methyltransferase</fullName>
    </alternativeName>
    <alternativeName>
        <fullName evidence="1">tRNA m2A37 methyltransferase</fullName>
    </alternativeName>
</protein>
<comment type="function">
    <text evidence="1">Specifically methylates position 2 of adenine 2503 in 23S rRNA and position 2 of adenine 37 in tRNAs.</text>
</comment>
<comment type="catalytic activity">
    <reaction evidence="1">
        <text>adenosine(2503) in 23S rRNA + 2 reduced [2Fe-2S]-[ferredoxin] + 2 S-adenosyl-L-methionine = 2-methyladenosine(2503) in 23S rRNA + 5'-deoxyadenosine + L-methionine + 2 oxidized [2Fe-2S]-[ferredoxin] + S-adenosyl-L-homocysteine</text>
        <dbReference type="Rhea" id="RHEA:42916"/>
        <dbReference type="Rhea" id="RHEA-COMP:10000"/>
        <dbReference type="Rhea" id="RHEA-COMP:10001"/>
        <dbReference type="Rhea" id="RHEA-COMP:10152"/>
        <dbReference type="Rhea" id="RHEA-COMP:10282"/>
        <dbReference type="ChEBI" id="CHEBI:17319"/>
        <dbReference type="ChEBI" id="CHEBI:33737"/>
        <dbReference type="ChEBI" id="CHEBI:33738"/>
        <dbReference type="ChEBI" id="CHEBI:57844"/>
        <dbReference type="ChEBI" id="CHEBI:57856"/>
        <dbReference type="ChEBI" id="CHEBI:59789"/>
        <dbReference type="ChEBI" id="CHEBI:74411"/>
        <dbReference type="ChEBI" id="CHEBI:74497"/>
        <dbReference type="EC" id="2.1.1.192"/>
    </reaction>
</comment>
<comment type="catalytic activity">
    <reaction evidence="1">
        <text>adenosine(37) in tRNA + 2 reduced [2Fe-2S]-[ferredoxin] + 2 S-adenosyl-L-methionine = 2-methyladenosine(37) in tRNA + 5'-deoxyadenosine + L-methionine + 2 oxidized [2Fe-2S]-[ferredoxin] + S-adenosyl-L-homocysteine</text>
        <dbReference type="Rhea" id="RHEA:43332"/>
        <dbReference type="Rhea" id="RHEA-COMP:10000"/>
        <dbReference type="Rhea" id="RHEA-COMP:10001"/>
        <dbReference type="Rhea" id="RHEA-COMP:10162"/>
        <dbReference type="Rhea" id="RHEA-COMP:10485"/>
        <dbReference type="ChEBI" id="CHEBI:17319"/>
        <dbReference type="ChEBI" id="CHEBI:33737"/>
        <dbReference type="ChEBI" id="CHEBI:33738"/>
        <dbReference type="ChEBI" id="CHEBI:57844"/>
        <dbReference type="ChEBI" id="CHEBI:57856"/>
        <dbReference type="ChEBI" id="CHEBI:59789"/>
        <dbReference type="ChEBI" id="CHEBI:74411"/>
        <dbReference type="ChEBI" id="CHEBI:74497"/>
        <dbReference type="EC" id="2.1.1.192"/>
    </reaction>
</comment>
<comment type="cofactor">
    <cofactor evidence="1">
        <name>[4Fe-4S] cluster</name>
        <dbReference type="ChEBI" id="CHEBI:49883"/>
    </cofactor>
    <text evidence="1">Binds 1 [4Fe-4S] cluster. The cluster is coordinated with 3 cysteines and an exchangeable S-adenosyl-L-methionine.</text>
</comment>
<comment type="subcellular location">
    <subcellularLocation>
        <location evidence="1">Cytoplasm</location>
    </subcellularLocation>
</comment>
<comment type="miscellaneous">
    <text evidence="1">Reaction proceeds by a ping-pong mechanism involving intermediate methylation of a conserved cysteine residue.</text>
</comment>
<comment type="similarity">
    <text evidence="1">Belongs to the radical SAM superfamily. RlmN family.</text>
</comment>
<comment type="sequence caution" evidence="4">
    <conflict type="erroneous initiation">
        <sequence resource="EMBL-CDS" id="ABP53797"/>
    </conflict>
</comment>
<sequence length="372" mass="40317">MTSLPLTPVNPDAPARRAAMPPRHLADFDLAGRQTLVTELGEPRFRARQVSTHYFGRLVRDPEQMTDLPAATREKLADQLLPTLLTPVRELACDDGATHKALWRLHDGSLVESVLMGYPDRVTVCLSSQAGCGMACPFCATGQAGLTRNLSTAEIVDQAVYLAGVAASGAVAGSPPRLSRVVFMGMGEPLANYNRVVAAIRRLVAPSPEGLGLSQRHITVSTVGLVPAIRRLASEDLSVTLALSLHAPDDELRDELVPVNQRWKVSEVLEAAWEYAARTGRRVSIEYAMIKDVNDQPWRADLLGRLLADRLAHVNLIPLNPTPGSRWDASPKPVEREFVRRLRAAGVSTTVRDTRGREIDGACGQLAAAEGP</sequence>
<name>RLMN_SALTO</name>
<feature type="chain" id="PRO_0000350384" description="Probable dual-specificity RNA methyltransferase RlmN">
    <location>
        <begin position="1"/>
        <end position="372"/>
    </location>
</feature>
<feature type="domain" description="Radical SAM core" evidence="2">
    <location>
        <begin position="118"/>
        <end position="357"/>
    </location>
</feature>
<feature type="region of interest" description="Disordered" evidence="3">
    <location>
        <begin position="1"/>
        <end position="20"/>
    </location>
</feature>
<feature type="active site" description="Proton acceptor" evidence="1">
    <location>
        <position position="112"/>
    </location>
</feature>
<feature type="active site" description="S-methylcysteine intermediate" evidence="1">
    <location>
        <position position="363"/>
    </location>
</feature>
<feature type="binding site" evidence="1">
    <location>
        <position position="132"/>
    </location>
    <ligand>
        <name>[4Fe-4S] cluster</name>
        <dbReference type="ChEBI" id="CHEBI:49883"/>
        <note>4Fe-4S-S-AdoMet</note>
    </ligand>
</feature>
<feature type="binding site" evidence="1">
    <location>
        <position position="136"/>
    </location>
    <ligand>
        <name>[4Fe-4S] cluster</name>
        <dbReference type="ChEBI" id="CHEBI:49883"/>
        <note>4Fe-4S-S-AdoMet</note>
    </ligand>
</feature>
<feature type="binding site" evidence="1">
    <location>
        <position position="139"/>
    </location>
    <ligand>
        <name>[4Fe-4S] cluster</name>
        <dbReference type="ChEBI" id="CHEBI:49883"/>
        <note>4Fe-4S-S-AdoMet</note>
    </ligand>
</feature>
<feature type="binding site" evidence="1">
    <location>
        <begin position="187"/>
        <end position="188"/>
    </location>
    <ligand>
        <name>S-adenosyl-L-methionine</name>
        <dbReference type="ChEBI" id="CHEBI:59789"/>
    </ligand>
</feature>
<feature type="binding site" evidence="1">
    <location>
        <position position="221"/>
    </location>
    <ligand>
        <name>S-adenosyl-L-methionine</name>
        <dbReference type="ChEBI" id="CHEBI:59789"/>
    </ligand>
</feature>
<feature type="binding site" evidence="1">
    <location>
        <begin position="244"/>
        <end position="246"/>
    </location>
    <ligand>
        <name>S-adenosyl-L-methionine</name>
        <dbReference type="ChEBI" id="CHEBI:59789"/>
    </ligand>
</feature>
<feature type="binding site" evidence="1">
    <location>
        <position position="320"/>
    </location>
    <ligand>
        <name>S-adenosyl-L-methionine</name>
        <dbReference type="ChEBI" id="CHEBI:59789"/>
    </ligand>
</feature>
<feature type="disulfide bond" description="(transient)" evidence="1">
    <location>
        <begin position="125"/>
        <end position="363"/>
    </location>
</feature>
<keyword id="KW-0004">4Fe-4S</keyword>
<keyword id="KW-0963">Cytoplasm</keyword>
<keyword id="KW-1015">Disulfide bond</keyword>
<keyword id="KW-0408">Iron</keyword>
<keyword id="KW-0411">Iron-sulfur</keyword>
<keyword id="KW-0479">Metal-binding</keyword>
<keyword id="KW-0489">Methyltransferase</keyword>
<keyword id="KW-1185">Reference proteome</keyword>
<keyword id="KW-0698">rRNA processing</keyword>
<keyword id="KW-0949">S-adenosyl-L-methionine</keyword>
<keyword id="KW-0808">Transferase</keyword>
<keyword id="KW-0819">tRNA processing</keyword>
<reference key="1">
    <citation type="journal article" date="2007" name="Proc. Natl. Acad. Sci. U.S.A.">
        <title>Genome sequencing reveals complex secondary metabolome in the marine actinomycete Salinispora tropica.</title>
        <authorList>
            <person name="Udwary D.W."/>
            <person name="Zeigler L."/>
            <person name="Asolkar R.N."/>
            <person name="Singan V."/>
            <person name="Lapidus A."/>
            <person name="Fenical W."/>
            <person name="Jensen P.R."/>
            <person name="Moore B.S."/>
        </authorList>
    </citation>
    <scope>NUCLEOTIDE SEQUENCE [LARGE SCALE GENOMIC DNA]</scope>
    <source>
        <strain>ATCC BAA-916 / DSM 44818 / JCM 13857 / NBRC 105044 / CNB-440</strain>
    </source>
</reference>
<proteinExistence type="inferred from homology"/>